<proteinExistence type="inferred from homology"/>
<comment type="subcellular location">
    <subcellularLocation>
        <location evidence="1">Nucleus</location>
    </subcellularLocation>
</comment>
<comment type="similarity">
    <text evidence="3">Belongs to the SH3BGR family.</text>
</comment>
<feature type="chain" id="PRO_0000383691" description="SH3 domain-binding glutamic acid-rich-like protein 2">
    <location>
        <begin position="1"/>
        <end position="106"/>
    </location>
</feature>
<feature type="short sequence motif" description="SH3-binding" evidence="2">
    <location>
        <begin position="61"/>
        <end position="67"/>
    </location>
</feature>
<accession>Q28FJ0</accession>
<evidence type="ECO:0000250" key="1"/>
<evidence type="ECO:0000255" key="2"/>
<evidence type="ECO:0000305" key="3"/>
<gene>
    <name type="primary">sh3bgrl2</name>
    <name type="ORF">TNeu077i17.1</name>
</gene>
<sequence>MVIKVFLASSSSSVTIKKRQQEVLQFLEANRIEYEEVDITMLEEKRQWMYKNIPKDRLPEQGNPLPPQIFNDNIYCGDYESFFESKESNTVFLFLQLKSRPAQKEL</sequence>
<keyword id="KW-0539">Nucleus</keyword>
<keyword id="KW-1185">Reference proteome</keyword>
<keyword id="KW-0729">SH3-binding</keyword>
<dbReference type="EMBL" id="CR761949">
    <property type="protein sequence ID" value="CAJ82873.1"/>
    <property type="molecule type" value="mRNA"/>
</dbReference>
<dbReference type="EMBL" id="BC167267">
    <property type="protein sequence ID" value="AAI67267.1"/>
    <property type="molecule type" value="mRNA"/>
</dbReference>
<dbReference type="EMBL" id="BC170711">
    <property type="protein sequence ID" value="AAI70711.1"/>
    <property type="molecule type" value="mRNA"/>
</dbReference>
<dbReference type="EMBL" id="BC170713">
    <property type="protein sequence ID" value="AAI70713.1"/>
    <property type="molecule type" value="mRNA"/>
</dbReference>
<dbReference type="RefSeq" id="NP_001016155.1">
    <property type="nucleotide sequence ID" value="NM_001016155.2"/>
</dbReference>
<dbReference type="SMR" id="Q28FJ0"/>
<dbReference type="FunCoup" id="Q28FJ0">
    <property type="interactions" value="1761"/>
</dbReference>
<dbReference type="PaxDb" id="8364-ENSXETP00000054866"/>
<dbReference type="GeneID" id="548909"/>
<dbReference type="KEGG" id="xtr:548909"/>
<dbReference type="AGR" id="Xenbase:XB-GENE-1015677"/>
<dbReference type="CTD" id="83699"/>
<dbReference type="Xenbase" id="XB-GENE-1015677">
    <property type="gene designation" value="sh3bgrl2"/>
</dbReference>
<dbReference type="eggNOG" id="KOG4023">
    <property type="taxonomic scope" value="Eukaryota"/>
</dbReference>
<dbReference type="HOGENOM" id="CLU_084862_3_0_1"/>
<dbReference type="InParanoid" id="Q28FJ0"/>
<dbReference type="OMA" id="MYKNIPK"/>
<dbReference type="OrthoDB" id="9932926at2759"/>
<dbReference type="PhylomeDB" id="Q28FJ0"/>
<dbReference type="TreeFam" id="TF105574"/>
<dbReference type="Proteomes" id="UP000008143">
    <property type="component" value="Chromosome 5"/>
</dbReference>
<dbReference type="Bgee" id="ENSXETG00000025848">
    <property type="expression patterns" value="Expressed in egg cell and 14 other cell types or tissues"/>
</dbReference>
<dbReference type="GO" id="GO:0005634">
    <property type="term" value="C:nucleus"/>
    <property type="evidence" value="ECO:0007669"/>
    <property type="project" value="UniProtKB-SubCell"/>
</dbReference>
<dbReference type="GO" id="GO:0017124">
    <property type="term" value="F:SH3 domain binding"/>
    <property type="evidence" value="ECO:0007669"/>
    <property type="project" value="UniProtKB-KW"/>
</dbReference>
<dbReference type="CDD" id="cd03030">
    <property type="entry name" value="GRX_SH3BGR"/>
    <property type="match status" value="1"/>
</dbReference>
<dbReference type="Gene3D" id="3.40.30.10">
    <property type="entry name" value="Glutaredoxin"/>
    <property type="match status" value="1"/>
</dbReference>
<dbReference type="InterPro" id="IPR006993">
    <property type="entry name" value="Glut_rich_SH3-bd"/>
</dbReference>
<dbReference type="InterPro" id="IPR051033">
    <property type="entry name" value="SH3BGR"/>
</dbReference>
<dbReference type="InterPro" id="IPR036249">
    <property type="entry name" value="Thioredoxin-like_sf"/>
</dbReference>
<dbReference type="PANTHER" id="PTHR12232">
    <property type="entry name" value="SH3 DOMAIN-BINDING GLUTAMIC ACID-RICH-LIKE PROTEIN"/>
    <property type="match status" value="1"/>
</dbReference>
<dbReference type="PANTHER" id="PTHR12232:SF4">
    <property type="entry name" value="SH3 DOMAIN-BINDING GLUTAMIC ACID-RICH-LIKE PROTEIN 2"/>
    <property type="match status" value="1"/>
</dbReference>
<dbReference type="Pfam" id="PF04908">
    <property type="entry name" value="SH3BGR"/>
    <property type="match status" value="1"/>
</dbReference>
<dbReference type="PIRSF" id="PIRSF008142">
    <property type="entry name" value="SH3-bind_E-rich_L"/>
    <property type="match status" value="1"/>
</dbReference>
<dbReference type="SUPFAM" id="SSF52833">
    <property type="entry name" value="Thioredoxin-like"/>
    <property type="match status" value="1"/>
</dbReference>
<reference key="1">
    <citation type="submission" date="2006-10" db="EMBL/GenBank/DDBJ databases">
        <authorList>
            <consortium name="Sanger Xenopus tropicalis EST/cDNA project"/>
        </authorList>
    </citation>
    <scope>NUCLEOTIDE SEQUENCE [LARGE SCALE MRNA]</scope>
    <source>
        <tissue>Neurula</tissue>
    </source>
</reference>
<reference key="2">
    <citation type="submission" date="2008-11" db="EMBL/GenBank/DDBJ databases">
        <authorList>
            <consortium name="NIH - Xenopus Gene Collection (XGC) project"/>
        </authorList>
    </citation>
    <scope>NUCLEOTIDE SEQUENCE [LARGE SCALE MRNA]</scope>
    <source>
        <tissue>Gastrula</tissue>
    </source>
</reference>
<name>SH3L2_XENTR</name>
<organism>
    <name type="scientific">Xenopus tropicalis</name>
    <name type="common">Western clawed frog</name>
    <name type="synonym">Silurana tropicalis</name>
    <dbReference type="NCBI Taxonomy" id="8364"/>
    <lineage>
        <taxon>Eukaryota</taxon>
        <taxon>Metazoa</taxon>
        <taxon>Chordata</taxon>
        <taxon>Craniata</taxon>
        <taxon>Vertebrata</taxon>
        <taxon>Euteleostomi</taxon>
        <taxon>Amphibia</taxon>
        <taxon>Batrachia</taxon>
        <taxon>Anura</taxon>
        <taxon>Pipoidea</taxon>
        <taxon>Pipidae</taxon>
        <taxon>Xenopodinae</taxon>
        <taxon>Xenopus</taxon>
        <taxon>Silurana</taxon>
    </lineage>
</organism>
<protein>
    <recommendedName>
        <fullName>SH3 domain-binding glutamic acid-rich-like protein 2</fullName>
    </recommendedName>
</protein>